<comment type="function">
    <text evidence="1">May help in the organization of the PsaE and PsaF subunits.</text>
</comment>
<comment type="subcellular location">
    <subcellularLocation>
        <location evidence="1">Cellular thylakoid membrane</location>
        <topology evidence="1">Single-pass membrane protein</topology>
    </subcellularLocation>
</comment>
<comment type="similarity">
    <text evidence="1">Belongs to the PsaJ family.</text>
</comment>
<feature type="chain" id="PRO_1000050918" description="Photosystem I reaction center subunit IX 1">
    <location>
        <begin position="1"/>
        <end position="45"/>
    </location>
</feature>
<feature type="transmembrane region" description="Helical" evidence="1">
    <location>
        <begin position="9"/>
        <end position="29"/>
    </location>
</feature>
<organism>
    <name type="scientific">Prochlorococcus marinus (strain NATL1A)</name>
    <dbReference type="NCBI Taxonomy" id="167555"/>
    <lineage>
        <taxon>Bacteria</taxon>
        <taxon>Bacillati</taxon>
        <taxon>Cyanobacteriota</taxon>
        <taxon>Cyanophyceae</taxon>
        <taxon>Synechococcales</taxon>
        <taxon>Prochlorococcaceae</taxon>
        <taxon>Prochlorococcus</taxon>
    </lineage>
</organism>
<gene>
    <name evidence="1" type="primary">psaJ1</name>
    <name type="ordered locus">NATL1_05231</name>
</gene>
<accession>A2C0S5</accession>
<protein>
    <recommendedName>
        <fullName evidence="1">Photosystem I reaction center subunit IX 1</fullName>
    </recommendedName>
</protein>
<evidence type="ECO:0000255" key="1">
    <source>
        <dbReference type="HAMAP-Rule" id="MF_00522"/>
    </source>
</evidence>
<sequence>MFQLFRTKWFRSAPVVATIWITLTAGIIVEFNRFVPDLLFHPMSF</sequence>
<dbReference type="EMBL" id="CP000553">
    <property type="protein sequence ID" value="ABM75085.1"/>
    <property type="molecule type" value="Genomic_DNA"/>
</dbReference>
<dbReference type="SMR" id="A2C0S5"/>
<dbReference type="KEGG" id="pme:NATL1_05231"/>
<dbReference type="eggNOG" id="ENOG5033A5A">
    <property type="taxonomic scope" value="Bacteria"/>
</dbReference>
<dbReference type="HOGENOM" id="CLU_212133_1_1_3"/>
<dbReference type="Proteomes" id="UP000002592">
    <property type="component" value="Chromosome"/>
</dbReference>
<dbReference type="GO" id="GO:0009522">
    <property type="term" value="C:photosystem I"/>
    <property type="evidence" value="ECO:0007669"/>
    <property type="project" value="UniProtKB-KW"/>
</dbReference>
<dbReference type="GO" id="GO:0031676">
    <property type="term" value="C:plasma membrane-derived thylakoid membrane"/>
    <property type="evidence" value="ECO:0007669"/>
    <property type="project" value="UniProtKB-SubCell"/>
</dbReference>
<dbReference type="GO" id="GO:0015979">
    <property type="term" value="P:photosynthesis"/>
    <property type="evidence" value="ECO:0007669"/>
    <property type="project" value="UniProtKB-UniRule"/>
</dbReference>
<dbReference type="Gene3D" id="1.20.5.510">
    <property type="entry name" value="Single helix bin"/>
    <property type="match status" value="1"/>
</dbReference>
<dbReference type="HAMAP" id="MF_00522">
    <property type="entry name" value="PSI_PsaJ"/>
    <property type="match status" value="1"/>
</dbReference>
<dbReference type="InterPro" id="IPR002615">
    <property type="entry name" value="PSI_PsaJ"/>
</dbReference>
<dbReference type="InterPro" id="IPR036062">
    <property type="entry name" value="PSI_PsaJ_sf"/>
</dbReference>
<dbReference type="NCBIfam" id="NF002743">
    <property type="entry name" value="PRK02733.1"/>
    <property type="match status" value="1"/>
</dbReference>
<dbReference type="PANTHER" id="PTHR36082">
    <property type="match status" value="1"/>
</dbReference>
<dbReference type="PANTHER" id="PTHR36082:SF2">
    <property type="entry name" value="PHOTOSYSTEM I REACTION CENTER SUBUNIT IX"/>
    <property type="match status" value="1"/>
</dbReference>
<dbReference type="Pfam" id="PF01701">
    <property type="entry name" value="PSI_PsaJ"/>
    <property type="match status" value="1"/>
</dbReference>
<dbReference type="SUPFAM" id="SSF81544">
    <property type="entry name" value="Subunit IX of photosystem I reaction centre, PsaJ"/>
    <property type="match status" value="1"/>
</dbReference>
<keyword id="KW-0472">Membrane</keyword>
<keyword id="KW-0602">Photosynthesis</keyword>
<keyword id="KW-0603">Photosystem I</keyword>
<keyword id="KW-0793">Thylakoid</keyword>
<keyword id="KW-0812">Transmembrane</keyword>
<keyword id="KW-1133">Transmembrane helix</keyword>
<proteinExistence type="inferred from homology"/>
<name>PSAJ1_PROM1</name>
<reference key="1">
    <citation type="journal article" date="2007" name="PLoS Genet.">
        <title>Patterns and implications of gene gain and loss in the evolution of Prochlorococcus.</title>
        <authorList>
            <person name="Kettler G.C."/>
            <person name="Martiny A.C."/>
            <person name="Huang K."/>
            <person name="Zucker J."/>
            <person name="Coleman M.L."/>
            <person name="Rodrigue S."/>
            <person name="Chen F."/>
            <person name="Lapidus A."/>
            <person name="Ferriera S."/>
            <person name="Johnson J."/>
            <person name="Steglich C."/>
            <person name="Church G.M."/>
            <person name="Richardson P."/>
            <person name="Chisholm S.W."/>
        </authorList>
    </citation>
    <scope>NUCLEOTIDE SEQUENCE [LARGE SCALE GENOMIC DNA]</scope>
    <source>
        <strain>NATL1A</strain>
    </source>
</reference>